<accession>P86491</accession>
<sequence length="385" mass="42888">MSQSPRIAVVGAGLGGAAAAKLLLQEGFNVRVYEQAPSFSRLGAGIHVGPNVMKILRRIGIEDALNEQGSHPDYWYSRHWQTGDVLAQIPLGDYAVKEYGASYLTVHRGDFHALLVEALPDSVMAYGKFLTKVEDRGNVVVMHFADGTTEEADIVIGPDGVNSRIREELLGPELPKYAGYLAHRAVFPTPEVKAGMLPFDACVKWWSDDRHMMTYFVTGKADELYYVTGVPVEKWDLNDRWLESSKEEMREAFSGWHPTVQALIDATVEVTKWSLLERDPLPLWSRGRLVLLGDACHPMKPHMAQGAAMAIEDGAMLARCLKEVGAHNHELAFALYEANRAERASKVQRISHDNTWLRTNEDPSWCFGYDVFNVPLVEPKVKAAA</sequence>
<feature type="signal peptide" evidence="3">
    <location>
        <begin position="1"/>
        <end position="20"/>
    </location>
</feature>
<feature type="chain" id="PRO_0000394198" description="6-hydroxynicotinate 3-monooxygenase" evidence="3">
    <location>
        <begin position="21"/>
        <end position="385"/>
    </location>
</feature>
<feature type="active site" description="Proton acceptor" evidence="1">
    <location>
        <position position="47"/>
    </location>
</feature>
<feature type="active site" description="Proton acceptor" evidence="1">
    <location>
        <position position="215"/>
    </location>
</feature>
<feature type="binding site" evidence="2">
    <location>
        <position position="15"/>
    </location>
    <ligand>
        <name>FAD</name>
        <dbReference type="ChEBI" id="CHEBI:57692"/>
    </ligand>
</feature>
<feature type="binding site" evidence="2">
    <location>
        <begin position="34"/>
        <end position="35"/>
    </location>
    <ligand>
        <name>FAD</name>
        <dbReference type="ChEBI" id="CHEBI:57692"/>
    </ligand>
</feature>
<feature type="binding site" evidence="2">
    <location>
        <position position="47"/>
    </location>
    <ligand>
        <name>FAD</name>
        <dbReference type="ChEBI" id="CHEBI:57692"/>
    </ligand>
</feature>
<feature type="binding site" evidence="2">
    <location>
        <position position="108"/>
    </location>
    <ligand>
        <name>FAD</name>
        <dbReference type="ChEBI" id="CHEBI:57692"/>
    </ligand>
</feature>
<feature type="binding site" evidence="2">
    <location>
        <position position="130"/>
    </location>
    <ligand>
        <name>FAD</name>
        <dbReference type="ChEBI" id="CHEBI:57692"/>
    </ligand>
</feature>
<feature type="binding site" evidence="2">
    <location>
        <position position="294"/>
    </location>
    <ligand>
        <name>FAD</name>
        <dbReference type="ChEBI" id="CHEBI:57692"/>
    </ligand>
</feature>
<feature type="binding site" evidence="2">
    <location>
        <begin position="307"/>
        <end position="308"/>
    </location>
    <ligand>
        <name>FAD</name>
        <dbReference type="ChEBI" id="CHEBI:57692"/>
    </ligand>
</feature>
<protein>
    <recommendedName>
        <fullName evidence="5">6-hydroxynicotinate 3-monooxygenase</fullName>
        <shortName>6-HNA monooxygenase</shortName>
        <ecNumber evidence="4">1.14.13.114</ecNumber>
    </recommendedName>
</protein>
<gene>
    <name type="primary">nicC</name>
</gene>
<name>6HN3M_PSEFL</name>
<keyword id="KW-0058">Aromatic hydrocarbons catabolism</keyword>
<keyword id="KW-0903">Direct protein sequencing</keyword>
<keyword id="KW-0274">FAD</keyword>
<keyword id="KW-0285">Flavoprotein</keyword>
<keyword id="KW-0503">Monooxygenase</keyword>
<keyword id="KW-0520">NAD</keyword>
<keyword id="KW-0521">NADP</keyword>
<keyword id="KW-0560">Oxidoreductase</keyword>
<keyword id="KW-0732">Signal</keyword>
<reference evidence="6" key="1">
    <citation type="journal article" date="1999" name="Eur. J. Biochem.">
        <title>Purification, characterization and gene cloning of 6-hydroxynicotinate 3-monooxygenase from Pseudomonas fluorescens TN5.</title>
        <authorList>
            <person name="Nakano H."/>
            <person name="Wieser M."/>
            <person name="Hurh B."/>
            <person name="Kawai T."/>
            <person name="Yoshida T."/>
            <person name="Yamane T."/>
            <person name="Nagasawa T."/>
        </authorList>
    </citation>
    <scope>NUCLEOTIDE SEQUENCE [GENOMIC DNA]</scope>
    <scope>PROTEIN SEQUENCE OF 323-340</scope>
    <scope>FUNCTION</scope>
    <scope>CATALYTIC ACTIVITY</scope>
    <scope>COFACTOR</scope>
    <scope>ACTIVITY REGULATION</scope>
    <scope>BIOPHYSICOCHEMICAL PROPERTIES</scope>
    <scope>SUBUNIT</scope>
    <source>
        <strain evidence="4">TN5</strain>
    </source>
</reference>
<dbReference type="EC" id="1.14.13.114" evidence="4"/>
<dbReference type="SMR" id="P86491"/>
<dbReference type="GO" id="GO:0043731">
    <property type="term" value="F:6-hydroxynicotinate 3-monooxygenase activity"/>
    <property type="evidence" value="ECO:0007669"/>
    <property type="project" value="UniProtKB-EC"/>
</dbReference>
<dbReference type="GO" id="GO:0071949">
    <property type="term" value="F:FAD binding"/>
    <property type="evidence" value="ECO:0007669"/>
    <property type="project" value="InterPro"/>
</dbReference>
<dbReference type="GO" id="GO:0004497">
    <property type="term" value="F:monooxygenase activity"/>
    <property type="evidence" value="ECO:0000314"/>
    <property type="project" value="UniProtKB"/>
</dbReference>
<dbReference type="GO" id="GO:1901848">
    <property type="term" value="P:nicotinate catabolic process"/>
    <property type="evidence" value="ECO:0000314"/>
    <property type="project" value="UniProtKB"/>
</dbReference>
<dbReference type="FunFam" id="3.50.50.60:FF:000223">
    <property type="entry name" value="6-hydroxynicotinate 3-monooxygenase"/>
    <property type="match status" value="1"/>
</dbReference>
<dbReference type="Gene3D" id="3.50.50.60">
    <property type="entry name" value="FAD/NAD(P)-binding domain"/>
    <property type="match status" value="1"/>
</dbReference>
<dbReference type="InterPro" id="IPR002938">
    <property type="entry name" value="FAD-bd"/>
</dbReference>
<dbReference type="InterPro" id="IPR050493">
    <property type="entry name" value="FAD-dep_Monooxygenase_BioMet"/>
</dbReference>
<dbReference type="InterPro" id="IPR036188">
    <property type="entry name" value="FAD/NAD-bd_sf"/>
</dbReference>
<dbReference type="PANTHER" id="PTHR13789:SF318">
    <property type="entry name" value="GERANYLGERANYL DIPHOSPHATE REDUCTASE"/>
    <property type="match status" value="1"/>
</dbReference>
<dbReference type="PANTHER" id="PTHR13789">
    <property type="entry name" value="MONOOXYGENASE"/>
    <property type="match status" value="1"/>
</dbReference>
<dbReference type="Pfam" id="PF01494">
    <property type="entry name" value="FAD_binding_3"/>
    <property type="match status" value="1"/>
</dbReference>
<dbReference type="PRINTS" id="PR00420">
    <property type="entry name" value="RNGMNOXGNASE"/>
</dbReference>
<dbReference type="SUPFAM" id="SSF54373">
    <property type="entry name" value="FAD-linked reductases, C-terminal domain"/>
    <property type="match status" value="1"/>
</dbReference>
<dbReference type="SUPFAM" id="SSF51905">
    <property type="entry name" value="FAD/NAD(P)-binding domain"/>
    <property type="match status" value="1"/>
</dbReference>
<comment type="function">
    <text evidence="4">Flavin-dependent monooxygenase (FMO) that catalyzes the decarboxylative hydroxylation of 6-hydroxynicotinic acid (6-HNA) to 2,5-dihydroxypyridine (2,5-DHP) with concomitant oxidation of NADH, a step in the aerobic nicotinate degradation pathway. Uses NADH in preference to NADPH as an electron donor.</text>
</comment>
<comment type="catalytic activity">
    <reaction evidence="4">
        <text>6-hydroxynicotinate + NADH + O2 + 2 H(+) = 2,5-dihydroxypyridine + CO2 + NAD(+) + H2O</text>
        <dbReference type="Rhea" id="RHEA:27333"/>
        <dbReference type="ChEBI" id="CHEBI:15377"/>
        <dbReference type="ChEBI" id="CHEBI:15378"/>
        <dbReference type="ChEBI" id="CHEBI:15379"/>
        <dbReference type="ChEBI" id="CHEBI:16364"/>
        <dbReference type="ChEBI" id="CHEBI:16526"/>
        <dbReference type="ChEBI" id="CHEBI:57540"/>
        <dbReference type="ChEBI" id="CHEBI:57664"/>
        <dbReference type="ChEBI" id="CHEBI:57945"/>
        <dbReference type="EC" id="1.14.13.114"/>
    </reaction>
</comment>
<comment type="cofactor">
    <cofactor evidence="4">
        <name>FAD</name>
        <dbReference type="ChEBI" id="CHEBI:57692"/>
    </cofactor>
    <text evidence="4">Binds 1 FAD molecule per subunit.</text>
</comment>
<comment type="activity regulation">
    <text evidence="4">Inhibited competitively by nicotinic acid with a Ki of 0.49 mM. Inhibited by thiol-specific compounds p-chloromercuribenzoate, DTNB, Ag(2)SO(4), HgCl(2), CuCl(2) and N-ethylmaleimide. No inhibition by o-phenanthroline, 8-hydroxyquinoline, EDTA, disodium 4,5-dihydroxy-m-benzenedisulfonate, fluoride, azide, KCl, LiCl, NaCl, BaCl(2), MnCl(2), MgCl(2), PBCl, ZnCl(2), CoCl(2), SnCl(2), FeSO(4), FeCl(3), NiCl(2), CdCl(2), AlCl(3), iodoacetic acid, hydro-xylamine, phenylhydrazine, semicarbazide, cysteamine, alpha,alpha-dipyridyl and urea.</text>
</comment>
<comment type="biophysicochemical properties">
    <kinetics>
        <KM evidence="4">98 uM for 6-hydroxynicotinic acid (at 30 degrees Celsius and pH 7.0)</KM>
        <KM evidence="4">150 uM for 4-hydroxybenzoic acid (at 30 degrees Celsius and pH 7.0)</KM>
        <Vmax evidence="4">6.67 umol/min/mg enzyme toward 6-hydroxynicotinic acid (at 30 degrees Celsius and pH 7.0)</Vmax>
    </kinetics>
    <phDependence>
        <text evidence="4">Optimum pH is 7.6 with 6-hydroxynicotinic acid as substrate. Stable between pH 6.0 and 9.0.</text>
    </phDependence>
    <temperatureDependence>
        <text evidence="4">Optimum temperature is 35 degrees Celsius with 6-hydroxynicotinic acid as substrate.</text>
    </temperatureDependence>
</comment>
<comment type="subunit">
    <text evidence="4">Monomer.</text>
</comment>
<comment type="similarity">
    <text evidence="6">Belongs to the 6-hydroxynicotinate 3-monooxygenase family.</text>
</comment>
<evidence type="ECO:0000250" key="1">
    <source>
        <dbReference type="UniProtKB" id="A0A0H3LKL4"/>
    </source>
</evidence>
<evidence type="ECO:0000250" key="2">
    <source>
        <dbReference type="UniProtKB" id="Q88FY2"/>
    </source>
</evidence>
<evidence type="ECO:0000255" key="3"/>
<evidence type="ECO:0000269" key="4">
    <source>
    </source>
</evidence>
<evidence type="ECO:0000303" key="5">
    <source>
    </source>
</evidence>
<evidence type="ECO:0000305" key="6"/>
<proteinExistence type="evidence at protein level"/>
<organism>
    <name type="scientific">Pseudomonas fluorescens</name>
    <dbReference type="NCBI Taxonomy" id="294"/>
    <lineage>
        <taxon>Bacteria</taxon>
        <taxon>Pseudomonadati</taxon>
        <taxon>Pseudomonadota</taxon>
        <taxon>Gammaproteobacteria</taxon>
        <taxon>Pseudomonadales</taxon>
        <taxon>Pseudomonadaceae</taxon>
        <taxon>Pseudomonas</taxon>
    </lineage>
</organism>